<reference key="1">
    <citation type="submission" date="2011-01" db="EMBL/GenBank/DDBJ databases">
        <title>Complete sequence of chromosome of Rahnella sp. Y9602.</title>
        <authorList>
            <consortium name="US DOE Joint Genome Institute"/>
            <person name="Lucas S."/>
            <person name="Copeland A."/>
            <person name="Lapidus A."/>
            <person name="Cheng J.-F."/>
            <person name="Goodwin L."/>
            <person name="Pitluck S."/>
            <person name="Lu M."/>
            <person name="Detter J.C."/>
            <person name="Han C."/>
            <person name="Tapia R."/>
            <person name="Land M."/>
            <person name="Hauser L."/>
            <person name="Kyrpides N."/>
            <person name="Ivanova N."/>
            <person name="Ovchinnikova G."/>
            <person name="Pagani I."/>
            <person name="Sobecky P.A."/>
            <person name="Martinez R.J."/>
            <person name="Woyke T."/>
        </authorList>
    </citation>
    <scope>NUCLEOTIDE SEQUENCE [LARGE SCALE GENOMIC DNA]</scope>
    <source>
        <strain>Y9602</strain>
    </source>
</reference>
<dbReference type="EMBL" id="CP002505">
    <property type="protein sequence ID" value="ADW72268.1"/>
    <property type="molecule type" value="Genomic_DNA"/>
</dbReference>
<dbReference type="RefSeq" id="WP_013573973.1">
    <property type="nucleotide sequence ID" value="NZ_JBHUCJ010000003.1"/>
</dbReference>
<dbReference type="SMR" id="E8XXT6"/>
<dbReference type="GeneID" id="95418683"/>
<dbReference type="KEGG" id="rah:Rahaq_0641"/>
<dbReference type="eggNOG" id="COG2132">
    <property type="taxonomic scope" value="Bacteria"/>
</dbReference>
<dbReference type="HOGENOM" id="CLU_009100_2_4_6"/>
<dbReference type="OrthoDB" id="9757546at2"/>
<dbReference type="Proteomes" id="UP000007257">
    <property type="component" value="Chromosome"/>
</dbReference>
<dbReference type="GO" id="GO:0032153">
    <property type="term" value="C:cell division site"/>
    <property type="evidence" value="ECO:0007669"/>
    <property type="project" value="UniProtKB-UniRule"/>
</dbReference>
<dbReference type="GO" id="GO:0030288">
    <property type="term" value="C:outer membrane-bounded periplasmic space"/>
    <property type="evidence" value="ECO:0007669"/>
    <property type="project" value="UniProtKB-UniRule"/>
</dbReference>
<dbReference type="GO" id="GO:0005507">
    <property type="term" value="F:copper ion binding"/>
    <property type="evidence" value="ECO:0007669"/>
    <property type="project" value="InterPro"/>
</dbReference>
<dbReference type="GO" id="GO:0016491">
    <property type="term" value="F:oxidoreductase activity"/>
    <property type="evidence" value="ECO:0007669"/>
    <property type="project" value="InterPro"/>
</dbReference>
<dbReference type="GO" id="GO:0043093">
    <property type="term" value="P:FtsZ-dependent cytokinesis"/>
    <property type="evidence" value="ECO:0007669"/>
    <property type="project" value="UniProtKB-UniRule"/>
</dbReference>
<dbReference type="CDD" id="cd13867">
    <property type="entry name" value="CuRO_2_CueO_FtsP"/>
    <property type="match status" value="1"/>
</dbReference>
<dbReference type="Gene3D" id="2.60.40.420">
    <property type="entry name" value="Cupredoxins - blue copper proteins"/>
    <property type="match status" value="3"/>
</dbReference>
<dbReference type="HAMAP" id="MF_00915">
    <property type="entry name" value="FtsP"/>
    <property type="match status" value="1"/>
</dbReference>
<dbReference type="InterPro" id="IPR011707">
    <property type="entry name" value="Cu-oxidase-like_N"/>
</dbReference>
<dbReference type="InterPro" id="IPR011706">
    <property type="entry name" value="Cu-oxidase_C"/>
</dbReference>
<dbReference type="InterPro" id="IPR045087">
    <property type="entry name" value="Cu-oxidase_fam"/>
</dbReference>
<dbReference type="InterPro" id="IPR008972">
    <property type="entry name" value="Cupredoxin"/>
</dbReference>
<dbReference type="InterPro" id="IPR026589">
    <property type="entry name" value="FtsP"/>
</dbReference>
<dbReference type="InterPro" id="IPR006311">
    <property type="entry name" value="TAT_signal"/>
</dbReference>
<dbReference type="InterPro" id="IPR019546">
    <property type="entry name" value="TAT_signal_bac_arc"/>
</dbReference>
<dbReference type="NCBIfam" id="NF008135">
    <property type="entry name" value="PRK10883.1"/>
    <property type="match status" value="1"/>
</dbReference>
<dbReference type="NCBIfam" id="TIGR01409">
    <property type="entry name" value="TAT_signal_seq"/>
    <property type="match status" value="1"/>
</dbReference>
<dbReference type="PANTHER" id="PTHR48267:SF1">
    <property type="entry name" value="BILIRUBIN OXIDASE"/>
    <property type="match status" value="1"/>
</dbReference>
<dbReference type="PANTHER" id="PTHR48267">
    <property type="entry name" value="CUPREDOXIN SUPERFAMILY PROTEIN"/>
    <property type="match status" value="1"/>
</dbReference>
<dbReference type="Pfam" id="PF07731">
    <property type="entry name" value="Cu-oxidase_2"/>
    <property type="match status" value="1"/>
</dbReference>
<dbReference type="Pfam" id="PF07732">
    <property type="entry name" value="Cu-oxidase_3"/>
    <property type="match status" value="1"/>
</dbReference>
<dbReference type="Pfam" id="PF10518">
    <property type="entry name" value="TAT_signal"/>
    <property type="match status" value="1"/>
</dbReference>
<dbReference type="SUPFAM" id="SSF49503">
    <property type="entry name" value="Cupredoxins"/>
    <property type="match status" value="3"/>
</dbReference>
<dbReference type="PROSITE" id="PS51318">
    <property type="entry name" value="TAT"/>
    <property type="match status" value="1"/>
</dbReference>
<feature type="signal peptide" description="Tat-type signal" evidence="1">
    <location>
        <begin position="1"/>
        <end position="27"/>
    </location>
</feature>
<feature type="chain" id="PRO_5000703684" description="Cell division protein FtsP">
    <location>
        <begin position="28"/>
        <end position="471"/>
    </location>
</feature>
<feature type="domain" description="Plastocyanin-like" evidence="1">
    <location>
        <begin position="229"/>
        <end position="288"/>
    </location>
</feature>
<gene>
    <name evidence="1" type="primary">ftsP</name>
    <name type="ordered locus">Rahaq_0641</name>
</gene>
<protein>
    <recommendedName>
        <fullName evidence="1">Cell division protein FtsP</fullName>
    </recommendedName>
</protein>
<comment type="function">
    <text evidence="1">Cell division protein that is required for growth during stress conditions. May be involved in protecting or stabilizing the divisomal assembly under conditions of stress.</text>
</comment>
<comment type="subcellular location">
    <subcellularLocation>
        <location evidence="1">Periplasm</location>
    </subcellularLocation>
    <text evidence="1">Localizes to the division septum.</text>
</comment>
<comment type="PTM">
    <text>Predicted to be exported by the Tat system. The position of the signal peptide cleavage has not been experimentally proven.</text>
</comment>
<comment type="similarity">
    <text evidence="1">Belongs to the FtsP family.</text>
</comment>
<accession>E8XXT6</accession>
<proteinExistence type="inferred from homology"/>
<evidence type="ECO:0000255" key="1">
    <source>
        <dbReference type="HAMAP-Rule" id="MF_00915"/>
    </source>
</evidence>
<organism>
    <name type="scientific">Rahnella sp. (strain Y9602)</name>
    <dbReference type="NCBI Taxonomy" id="2703885"/>
    <lineage>
        <taxon>Bacteria</taxon>
        <taxon>Pseudomonadati</taxon>
        <taxon>Pseudomonadota</taxon>
        <taxon>Gammaproteobacteria</taxon>
        <taxon>Enterobacterales</taxon>
        <taxon>Yersiniaceae</taxon>
        <taxon>Rahnella</taxon>
    </lineage>
</organism>
<name>FTSP_RAHSY</name>
<sequence length="471" mass="51081">MSLSRRSFLQASGVALAAGALPLKAEASGSQPALPVPPLLESRRGQPLFLTLQAAHWSFLGGAKAPVWGINGMYLGPTVKVHSGDDVKLIYSNRLAEPVSMTVSGLLEPGTLTGGAARLMQPGVDWSPVLPIRQAAATCWYHANTPNRMAPHVYNGLAGMWIVEDEVSKNLPLPNHYGVDDFPIIIQDKRLDGFGVPQYDTPASGGFFGDTMLVNGVQSPYVEVSRGWVRLRLLNASNARRYELSMTDNRAFHVVASDLGFLPAPMTVKRLSLGPGERREVLVDMSQGEEVSITAGEAAGVMDRLRGLFEPSSILVSTIVLTLKPTGLLPLVTDNLPMRLLADQILSGNVVRTRDLRLGDSEPGINGAMWDINRIDLTAQQGTWERWTVHADMPQTFHAEGVSFLVKSVNGAAPLVEDAGFKDTVWVDGDVELLVYFNQPSYEHFPFVYRSGALELADRGSAGNMLVQPSM</sequence>
<keyword id="KW-0131">Cell cycle</keyword>
<keyword id="KW-0132">Cell division</keyword>
<keyword id="KW-0574">Periplasm</keyword>
<keyword id="KW-0732">Signal</keyword>